<evidence type="ECO:0000255" key="1">
    <source>
        <dbReference type="HAMAP-Rule" id="MF_01690"/>
    </source>
</evidence>
<dbReference type="EC" id="3.5.1.18" evidence="1"/>
<dbReference type="EMBL" id="CP000709">
    <property type="protein sequence ID" value="ABQ62668.1"/>
    <property type="molecule type" value="Genomic_DNA"/>
</dbReference>
<dbReference type="RefSeq" id="WP_004687037.1">
    <property type="nucleotide sequence ID" value="NC_009504.1"/>
</dbReference>
<dbReference type="SMR" id="A5VVT7"/>
<dbReference type="GeneID" id="97534920"/>
<dbReference type="KEGG" id="bov:BOV_A0972"/>
<dbReference type="HOGENOM" id="CLU_021802_4_0_5"/>
<dbReference type="PhylomeDB" id="A5VVT7"/>
<dbReference type="UniPathway" id="UPA00034">
    <property type="reaction ID" value="UER00021"/>
</dbReference>
<dbReference type="Proteomes" id="UP000006383">
    <property type="component" value="Chromosome II"/>
</dbReference>
<dbReference type="GO" id="GO:0008777">
    <property type="term" value="F:acetylornithine deacetylase activity"/>
    <property type="evidence" value="ECO:0007669"/>
    <property type="project" value="TreeGrafter"/>
</dbReference>
<dbReference type="GO" id="GO:0050897">
    <property type="term" value="F:cobalt ion binding"/>
    <property type="evidence" value="ECO:0007669"/>
    <property type="project" value="UniProtKB-UniRule"/>
</dbReference>
<dbReference type="GO" id="GO:0009014">
    <property type="term" value="F:succinyl-diaminopimelate desuccinylase activity"/>
    <property type="evidence" value="ECO:0007669"/>
    <property type="project" value="UniProtKB-UniRule"/>
</dbReference>
<dbReference type="GO" id="GO:0008270">
    <property type="term" value="F:zinc ion binding"/>
    <property type="evidence" value="ECO:0007669"/>
    <property type="project" value="UniProtKB-UniRule"/>
</dbReference>
<dbReference type="GO" id="GO:0019877">
    <property type="term" value="P:diaminopimelate biosynthetic process"/>
    <property type="evidence" value="ECO:0007669"/>
    <property type="project" value="UniProtKB-UniRule"/>
</dbReference>
<dbReference type="GO" id="GO:0006526">
    <property type="term" value="P:L-arginine biosynthetic process"/>
    <property type="evidence" value="ECO:0007669"/>
    <property type="project" value="TreeGrafter"/>
</dbReference>
<dbReference type="GO" id="GO:0009089">
    <property type="term" value="P:lysine biosynthetic process via diaminopimelate"/>
    <property type="evidence" value="ECO:0007669"/>
    <property type="project" value="UniProtKB-UniRule"/>
</dbReference>
<dbReference type="CDD" id="cd03891">
    <property type="entry name" value="M20_DapE_proteobac"/>
    <property type="match status" value="1"/>
</dbReference>
<dbReference type="Gene3D" id="3.30.70.360">
    <property type="match status" value="1"/>
</dbReference>
<dbReference type="Gene3D" id="3.40.630.10">
    <property type="entry name" value="Zn peptidases"/>
    <property type="match status" value="2"/>
</dbReference>
<dbReference type="HAMAP" id="MF_01690">
    <property type="entry name" value="DapE"/>
    <property type="match status" value="1"/>
</dbReference>
<dbReference type="InterPro" id="IPR001261">
    <property type="entry name" value="ArgE/DapE_CS"/>
</dbReference>
<dbReference type="InterPro" id="IPR036264">
    <property type="entry name" value="Bact_exopeptidase_dim_dom"/>
</dbReference>
<dbReference type="InterPro" id="IPR005941">
    <property type="entry name" value="DapE_proteobac"/>
</dbReference>
<dbReference type="InterPro" id="IPR002933">
    <property type="entry name" value="Peptidase_M20"/>
</dbReference>
<dbReference type="InterPro" id="IPR011650">
    <property type="entry name" value="Peptidase_M20_dimer"/>
</dbReference>
<dbReference type="InterPro" id="IPR050072">
    <property type="entry name" value="Peptidase_M20A"/>
</dbReference>
<dbReference type="NCBIfam" id="TIGR01246">
    <property type="entry name" value="dapE_proteo"/>
    <property type="match status" value="1"/>
</dbReference>
<dbReference type="NCBIfam" id="NF009557">
    <property type="entry name" value="PRK13009.1"/>
    <property type="match status" value="1"/>
</dbReference>
<dbReference type="PANTHER" id="PTHR43808">
    <property type="entry name" value="ACETYLORNITHINE DEACETYLASE"/>
    <property type="match status" value="1"/>
</dbReference>
<dbReference type="PANTHER" id="PTHR43808:SF31">
    <property type="entry name" value="N-ACETYL-L-CITRULLINE DEACETYLASE"/>
    <property type="match status" value="1"/>
</dbReference>
<dbReference type="Pfam" id="PF07687">
    <property type="entry name" value="M20_dimer"/>
    <property type="match status" value="1"/>
</dbReference>
<dbReference type="Pfam" id="PF01546">
    <property type="entry name" value="Peptidase_M20"/>
    <property type="match status" value="1"/>
</dbReference>
<dbReference type="SUPFAM" id="SSF55031">
    <property type="entry name" value="Bacterial exopeptidase dimerisation domain"/>
    <property type="match status" value="1"/>
</dbReference>
<dbReference type="SUPFAM" id="SSF53187">
    <property type="entry name" value="Zn-dependent exopeptidases"/>
    <property type="match status" value="1"/>
</dbReference>
<dbReference type="PROSITE" id="PS00758">
    <property type="entry name" value="ARGE_DAPE_CPG2_1"/>
    <property type="match status" value="1"/>
</dbReference>
<dbReference type="PROSITE" id="PS00759">
    <property type="entry name" value="ARGE_DAPE_CPG2_2"/>
    <property type="match status" value="1"/>
</dbReference>
<accession>A5VVT7</accession>
<gene>
    <name evidence="1" type="primary">dapE</name>
    <name type="ordered locus">BOV_A0972</name>
</gene>
<feature type="chain" id="PRO_0000375489" description="Succinyl-diaminopimelate desuccinylase">
    <location>
        <begin position="1"/>
        <end position="395"/>
    </location>
</feature>
<feature type="active site" evidence="1">
    <location>
        <position position="76"/>
    </location>
</feature>
<feature type="active site" description="Proton acceptor" evidence="1">
    <location>
        <position position="141"/>
    </location>
</feature>
<feature type="binding site" evidence="1">
    <location>
        <position position="74"/>
    </location>
    <ligand>
        <name>Zn(2+)</name>
        <dbReference type="ChEBI" id="CHEBI:29105"/>
        <label>1</label>
    </ligand>
</feature>
<feature type="binding site" evidence="1">
    <location>
        <position position="107"/>
    </location>
    <ligand>
        <name>Zn(2+)</name>
        <dbReference type="ChEBI" id="CHEBI:29105"/>
        <label>1</label>
    </ligand>
</feature>
<feature type="binding site" evidence="1">
    <location>
        <position position="107"/>
    </location>
    <ligand>
        <name>Zn(2+)</name>
        <dbReference type="ChEBI" id="CHEBI:29105"/>
        <label>2</label>
    </ligand>
</feature>
<feature type="binding site" evidence="1">
    <location>
        <position position="142"/>
    </location>
    <ligand>
        <name>Zn(2+)</name>
        <dbReference type="ChEBI" id="CHEBI:29105"/>
        <label>2</label>
    </ligand>
</feature>
<feature type="binding site" evidence="1">
    <location>
        <position position="170"/>
    </location>
    <ligand>
        <name>Zn(2+)</name>
        <dbReference type="ChEBI" id="CHEBI:29105"/>
        <label>1</label>
    </ligand>
</feature>
<feature type="binding site" evidence="1">
    <location>
        <position position="368"/>
    </location>
    <ligand>
        <name>Zn(2+)</name>
        <dbReference type="ChEBI" id="CHEBI:29105"/>
        <label>2</label>
    </ligand>
</feature>
<name>DAPE_BRUO2</name>
<sequence>MTLPVNPADNLAALIRCPSVTPAEGGALTALEKMLKLMGFSANRPVFSDDNTPDIENLYARKSGNGPHLMFAGHTDVVPPGDEKDWKHPPFAAAIEDGVMYGRGAVDMKGGIACFVAAVARHIEKHGNIKGSISFLITGDEEGPAVNGTVKLLEWAKQRGESWDASIVGEPTNPNALGDMIKIGRRGSLSGTITVHGVQGHAAYPHLAENPVRGIVTLVDSLLYPAFDEGTANFQASNLEVTTIDVGNKATNVIPNKATASFNIRFNDTWTAESLQAEIISRLERAARDNRLRQGRETPIKYELTWRERPSHVFLTHDEKLIGTLTASVEAVTGKRPELSTSGGTSDARFIKDYCPVVEFGLTGQTMHMVDERVALADLEGLTQIYERFIADFFG</sequence>
<comment type="function">
    <text evidence="1">Catalyzes the hydrolysis of N-succinyl-L,L-diaminopimelic acid (SDAP), forming succinate and LL-2,6-diaminopimelate (DAP), an intermediate involved in the bacterial biosynthesis of lysine and meso-diaminopimelic acid, an essential component of bacterial cell walls.</text>
</comment>
<comment type="catalytic activity">
    <reaction evidence="1">
        <text>N-succinyl-(2S,6S)-2,6-diaminopimelate + H2O = (2S,6S)-2,6-diaminopimelate + succinate</text>
        <dbReference type="Rhea" id="RHEA:22608"/>
        <dbReference type="ChEBI" id="CHEBI:15377"/>
        <dbReference type="ChEBI" id="CHEBI:30031"/>
        <dbReference type="ChEBI" id="CHEBI:57609"/>
        <dbReference type="ChEBI" id="CHEBI:58087"/>
        <dbReference type="EC" id="3.5.1.18"/>
    </reaction>
</comment>
<comment type="cofactor">
    <cofactor evidence="1">
        <name>Zn(2+)</name>
        <dbReference type="ChEBI" id="CHEBI:29105"/>
    </cofactor>
    <cofactor evidence="1">
        <name>Co(2+)</name>
        <dbReference type="ChEBI" id="CHEBI:48828"/>
    </cofactor>
    <text evidence="1">Binds 2 Zn(2+) or Co(2+) ions per subunit.</text>
</comment>
<comment type="pathway">
    <text evidence="1">Amino-acid biosynthesis; L-lysine biosynthesis via DAP pathway; LL-2,6-diaminopimelate from (S)-tetrahydrodipicolinate (succinylase route): step 3/3.</text>
</comment>
<comment type="subunit">
    <text evidence="1">Homodimer.</text>
</comment>
<comment type="similarity">
    <text evidence="1">Belongs to the peptidase M20A family. DapE subfamily.</text>
</comment>
<organism>
    <name type="scientific">Brucella ovis (strain ATCC 25840 / 63/290 / NCTC 10512)</name>
    <dbReference type="NCBI Taxonomy" id="444178"/>
    <lineage>
        <taxon>Bacteria</taxon>
        <taxon>Pseudomonadati</taxon>
        <taxon>Pseudomonadota</taxon>
        <taxon>Alphaproteobacteria</taxon>
        <taxon>Hyphomicrobiales</taxon>
        <taxon>Brucellaceae</taxon>
        <taxon>Brucella/Ochrobactrum group</taxon>
        <taxon>Brucella</taxon>
    </lineage>
</organism>
<reference key="1">
    <citation type="journal article" date="2009" name="PLoS ONE">
        <title>Genome degradation in Brucella ovis corresponds with narrowing of its host range and tissue tropism.</title>
        <authorList>
            <person name="Tsolis R.M."/>
            <person name="Seshadri R."/>
            <person name="Santos R.L."/>
            <person name="Sangari F.J."/>
            <person name="Lobo J.M."/>
            <person name="de Jong M.F."/>
            <person name="Ren Q."/>
            <person name="Myers G."/>
            <person name="Brinkac L.M."/>
            <person name="Nelson W.C."/>
            <person name="Deboy R.T."/>
            <person name="Angiuoli S."/>
            <person name="Khouri H."/>
            <person name="Dimitrov G."/>
            <person name="Robinson J.R."/>
            <person name="Mulligan S."/>
            <person name="Walker R.L."/>
            <person name="Elzer P.E."/>
            <person name="Hassan K.A."/>
            <person name="Paulsen I.T."/>
        </authorList>
    </citation>
    <scope>NUCLEOTIDE SEQUENCE [LARGE SCALE GENOMIC DNA]</scope>
    <source>
        <strain>ATCC 25840 / 63/290 / NCTC 10512</strain>
    </source>
</reference>
<proteinExistence type="inferred from homology"/>
<keyword id="KW-0028">Amino-acid biosynthesis</keyword>
<keyword id="KW-0170">Cobalt</keyword>
<keyword id="KW-0220">Diaminopimelate biosynthesis</keyword>
<keyword id="KW-0378">Hydrolase</keyword>
<keyword id="KW-0457">Lysine biosynthesis</keyword>
<keyword id="KW-0479">Metal-binding</keyword>
<keyword id="KW-0862">Zinc</keyword>
<protein>
    <recommendedName>
        <fullName evidence="1">Succinyl-diaminopimelate desuccinylase</fullName>
        <shortName evidence="1">SDAP desuccinylase</shortName>
        <ecNumber evidence="1">3.5.1.18</ecNumber>
    </recommendedName>
    <alternativeName>
        <fullName evidence="1">N-succinyl-LL-2,6-diaminoheptanedioate amidohydrolase</fullName>
    </alternativeName>
</protein>